<organism>
    <name type="scientific">Brucella canis (strain ATCC 23365 / NCTC 10854 / RM-666)</name>
    <dbReference type="NCBI Taxonomy" id="483179"/>
    <lineage>
        <taxon>Bacteria</taxon>
        <taxon>Pseudomonadati</taxon>
        <taxon>Pseudomonadota</taxon>
        <taxon>Alphaproteobacteria</taxon>
        <taxon>Hyphomicrobiales</taxon>
        <taxon>Brucellaceae</taxon>
        <taxon>Brucella/Ochrobactrum group</taxon>
        <taxon>Brucella</taxon>
    </lineage>
</organism>
<name>SURE_BRUC2</name>
<reference key="1">
    <citation type="submission" date="2007-10" db="EMBL/GenBank/DDBJ databases">
        <title>Brucella canis ATCC 23365 whole genome shotgun sequencing project.</title>
        <authorList>
            <person name="Setubal J.C."/>
            <person name="Bowns C."/>
            <person name="Boyle S."/>
            <person name="Crasta O.R."/>
            <person name="Czar M.J."/>
            <person name="Dharmanolla C."/>
            <person name="Gillespie J.J."/>
            <person name="Kenyon R.W."/>
            <person name="Lu J."/>
            <person name="Mane S."/>
            <person name="Mohapatra S."/>
            <person name="Nagrani S."/>
            <person name="Purkayastha A."/>
            <person name="Rajasimha H.K."/>
            <person name="Shallom J.M."/>
            <person name="Shallom S."/>
            <person name="Shukla M."/>
            <person name="Snyder E.E."/>
            <person name="Sobral B.W."/>
            <person name="Wattam A.R."/>
            <person name="Will R."/>
            <person name="Williams K."/>
            <person name="Yoo H."/>
            <person name="Bruce D."/>
            <person name="Detter C."/>
            <person name="Munk C."/>
            <person name="Brettin T.S."/>
        </authorList>
    </citation>
    <scope>NUCLEOTIDE SEQUENCE [LARGE SCALE GENOMIC DNA]</scope>
    <source>
        <strain>ATCC 23365 / NCTC 10854 / RM-666</strain>
    </source>
</reference>
<keyword id="KW-0963">Cytoplasm</keyword>
<keyword id="KW-0378">Hydrolase</keyword>
<keyword id="KW-0479">Metal-binding</keyword>
<keyword id="KW-0547">Nucleotide-binding</keyword>
<keyword id="KW-1185">Reference proteome</keyword>
<sequence length="255" mass="27451">MRILLTNDDGIHAEGLAVLERIARKLSDDVWVVAPETDQSGLAHSLTLSEPLRLRQIDARHFALRGTPTDCVIMGVRHVLPGAPDLVLSGVNSGANMADDVTYSGTVAGAMEGTLLGVRAIALSQEYEYAGDRRIVPWETAEAHAPELIGRLMEAGWPEGVLLNLNFPNCAPEEVKGVRVTAQGKLSHDARLDERRDGRGFPYFWLHFGRGKAPVADDSDIAAIRSGCISVTPLHLDLTAHKVRAELGAALGVEA</sequence>
<feature type="chain" id="PRO_1000075017" description="5'-nucleotidase SurE">
    <location>
        <begin position="1"/>
        <end position="255"/>
    </location>
</feature>
<feature type="binding site" evidence="1">
    <location>
        <position position="8"/>
    </location>
    <ligand>
        <name>a divalent metal cation</name>
        <dbReference type="ChEBI" id="CHEBI:60240"/>
    </ligand>
</feature>
<feature type="binding site" evidence="1">
    <location>
        <position position="9"/>
    </location>
    <ligand>
        <name>a divalent metal cation</name>
        <dbReference type="ChEBI" id="CHEBI:60240"/>
    </ligand>
</feature>
<feature type="binding site" evidence="1">
    <location>
        <position position="40"/>
    </location>
    <ligand>
        <name>a divalent metal cation</name>
        <dbReference type="ChEBI" id="CHEBI:60240"/>
    </ligand>
</feature>
<feature type="binding site" evidence="1">
    <location>
        <position position="92"/>
    </location>
    <ligand>
        <name>a divalent metal cation</name>
        <dbReference type="ChEBI" id="CHEBI:60240"/>
    </ligand>
</feature>
<dbReference type="EC" id="3.1.3.5" evidence="1"/>
<dbReference type="EMBL" id="CP000872">
    <property type="protein sequence ID" value="ABX61962.1"/>
    <property type="molecule type" value="Genomic_DNA"/>
</dbReference>
<dbReference type="RefSeq" id="WP_004683703.1">
    <property type="nucleotide sequence ID" value="NC_010103.1"/>
</dbReference>
<dbReference type="SMR" id="A9MAQ9"/>
<dbReference type="GeneID" id="97533818"/>
<dbReference type="KEGG" id="bcs:BCAN_A0900"/>
<dbReference type="HOGENOM" id="CLU_045192_1_2_5"/>
<dbReference type="PhylomeDB" id="A9MAQ9"/>
<dbReference type="Proteomes" id="UP000001385">
    <property type="component" value="Chromosome I"/>
</dbReference>
<dbReference type="GO" id="GO:0005737">
    <property type="term" value="C:cytoplasm"/>
    <property type="evidence" value="ECO:0007669"/>
    <property type="project" value="UniProtKB-SubCell"/>
</dbReference>
<dbReference type="GO" id="GO:0008254">
    <property type="term" value="F:3'-nucleotidase activity"/>
    <property type="evidence" value="ECO:0007669"/>
    <property type="project" value="TreeGrafter"/>
</dbReference>
<dbReference type="GO" id="GO:0008253">
    <property type="term" value="F:5'-nucleotidase activity"/>
    <property type="evidence" value="ECO:0007669"/>
    <property type="project" value="UniProtKB-UniRule"/>
</dbReference>
<dbReference type="GO" id="GO:0004309">
    <property type="term" value="F:exopolyphosphatase activity"/>
    <property type="evidence" value="ECO:0007669"/>
    <property type="project" value="TreeGrafter"/>
</dbReference>
<dbReference type="GO" id="GO:0046872">
    <property type="term" value="F:metal ion binding"/>
    <property type="evidence" value="ECO:0007669"/>
    <property type="project" value="UniProtKB-UniRule"/>
</dbReference>
<dbReference type="GO" id="GO:0000166">
    <property type="term" value="F:nucleotide binding"/>
    <property type="evidence" value="ECO:0007669"/>
    <property type="project" value="UniProtKB-KW"/>
</dbReference>
<dbReference type="FunFam" id="3.40.1210.10:FF:000001">
    <property type="entry name" value="5'/3'-nucleotidase SurE"/>
    <property type="match status" value="1"/>
</dbReference>
<dbReference type="Gene3D" id="3.40.1210.10">
    <property type="entry name" value="Survival protein SurE-like phosphatase/nucleotidase"/>
    <property type="match status" value="1"/>
</dbReference>
<dbReference type="HAMAP" id="MF_00060">
    <property type="entry name" value="SurE"/>
    <property type="match status" value="1"/>
</dbReference>
<dbReference type="InterPro" id="IPR030048">
    <property type="entry name" value="SurE"/>
</dbReference>
<dbReference type="InterPro" id="IPR002828">
    <property type="entry name" value="SurE-like_Pase/nucleotidase"/>
</dbReference>
<dbReference type="InterPro" id="IPR036523">
    <property type="entry name" value="SurE-like_sf"/>
</dbReference>
<dbReference type="NCBIfam" id="NF001490">
    <property type="entry name" value="PRK00346.1-4"/>
    <property type="match status" value="1"/>
</dbReference>
<dbReference type="NCBIfam" id="TIGR00087">
    <property type="entry name" value="surE"/>
    <property type="match status" value="1"/>
</dbReference>
<dbReference type="PANTHER" id="PTHR30457">
    <property type="entry name" value="5'-NUCLEOTIDASE SURE"/>
    <property type="match status" value="1"/>
</dbReference>
<dbReference type="PANTHER" id="PTHR30457:SF12">
    <property type="entry name" value="5'_3'-NUCLEOTIDASE SURE"/>
    <property type="match status" value="1"/>
</dbReference>
<dbReference type="Pfam" id="PF01975">
    <property type="entry name" value="SurE"/>
    <property type="match status" value="1"/>
</dbReference>
<dbReference type="SUPFAM" id="SSF64167">
    <property type="entry name" value="SurE-like"/>
    <property type="match status" value="1"/>
</dbReference>
<comment type="function">
    <text evidence="1">Nucleotidase that shows phosphatase activity on nucleoside 5'-monophosphates.</text>
</comment>
<comment type="catalytic activity">
    <reaction evidence="1">
        <text>a ribonucleoside 5'-phosphate + H2O = a ribonucleoside + phosphate</text>
        <dbReference type="Rhea" id="RHEA:12484"/>
        <dbReference type="ChEBI" id="CHEBI:15377"/>
        <dbReference type="ChEBI" id="CHEBI:18254"/>
        <dbReference type="ChEBI" id="CHEBI:43474"/>
        <dbReference type="ChEBI" id="CHEBI:58043"/>
        <dbReference type="EC" id="3.1.3.5"/>
    </reaction>
</comment>
<comment type="cofactor">
    <cofactor evidence="1">
        <name>a divalent metal cation</name>
        <dbReference type="ChEBI" id="CHEBI:60240"/>
    </cofactor>
    <text evidence="1">Binds 1 divalent metal cation per subunit.</text>
</comment>
<comment type="subcellular location">
    <subcellularLocation>
        <location evidence="1">Cytoplasm</location>
    </subcellularLocation>
</comment>
<comment type="similarity">
    <text evidence="1">Belongs to the SurE nucleotidase family.</text>
</comment>
<accession>A9MAQ9</accession>
<gene>
    <name evidence="1" type="primary">surE</name>
    <name type="ordered locus">BCAN_A0900</name>
</gene>
<proteinExistence type="inferred from homology"/>
<evidence type="ECO:0000255" key="1">
    <source>
        <dbReference type="HAMAP-Rule" id="MF_00060"/>
    </source>
</evidence>
<protein>
    <recommendedName>
        <fullName evidence="1">5'-nucleotidase SurE</fullName>
        <ecNumber evidence="1">3.1.3.5</ecNumber>
    </recommendedName>
    <alternativeName>
        <fullName evidence="1">Nucleoside 5'-monophosphate phosphohydrolase</fullName>
    </alternativeName>
</protein>